<keyword id="KW-0963">Cytoplasm</keyword>
<keyword id="KW-0968">Cytoplasmic vesicle</keyword>
<keyword id="KW-0221">Differentiation</keyword>
<keyword id="KW-0967">Endosome</keyword>
<keyword id="KW-0653">Protein transport</keyword>
<keyword id="KW-1185">Reference proteome</keyword>
<keyword id="KW-0744">Spermatogenesis</keyword>
<keyword id="KW-0804">Transcription</keyword>
<keyword id="KW-0805">Transcription regulation</keyword>
<keyword id="KW-0813">Transport</keyword>
<name>SPE39_DANRE</name>
<dbReference type="EMBL" id="AY394945">
    <property type="protein sequence ID" value="AAQ94572.1"/>
    <property type="molecule type" value="mRNA"/>
</dbReference>
<dbReference type="EMBL" id="BX679672">
    <property type="protein sequence ID" value="CAH68911.1"/>
    <property type="molecule type" value="Genomic_DNA"/>
</dbReference>
<dbReference type="EMBL" id="BX510992">
    <property type="protein sequence ID" value="CAH68911.1"/>
    <property type="status" value="JOINED"/>
    <property type="molecule type" value="Genomic_DNA"/>
</dbReference>
<dbReference type="EMBL" id="BX510992">
    <property type="protein sequence ID" value="CAH69151.1"/>
    <property type="molecule type" value="Genomic_DNA"/>
</dbReference>
<dbReference type="EMBL" id="BX679672">
    <property type="protein sequence ID" value="CAH69151.1"/>
    <property type="status" value="JOINED"/>
    <property type="molecule type" value="Genomic_DNA"/>
</dbReference>
<dbReference type="EMBL" id="BC097010">
    <property type="protein sequence ID" value="AAH97010.1"/>
    <property type="molecule type" value="mRNA"/>
</dbReference>
<dbReference type="RefSeq" id="NP_001001836.1">
    <property type="nucleotide sequence ID" value="NM_001001836.1"/>
</dbReference>
<dbReference type="SMR" id="Q5TYV4"/>
<dbReference type="FunCoup" id="Q5TYV4">
    <property type="interactions" value="2683"/>
</dbReference>
<dbReference type="STRING" id="7955.ENSDARP00000132081"/>
<dbReference type="PaxDb" id="7955-ENSDARP00000041450"/>
<dbReference type="Ensembl" id="ENSDART00000191333">
    <property type="protein sequence ID" value="ENSDARP00000157217"/>
    <property type="gene ID" value="ENSDARG00000103690"/>
</dbReference>
<dbReference type="GeneID" id="415096"/>
<dbReference type="KEGG" id="dre:415096"/>
<dbReference type="AGR" id="ZFIN:ZDB-GENE-040520-1"/>
<dbReference type="CTD" id="63894"/>
<dbReference type="ZFIN" id="ZDB-GENE-040520-1">
    <property type="gene designation" value="vipas39"/>
</dbReference>
<dbReference type="eggNOG" id="KOG4677">
    <property type="taxonomic scope" value="Eukaryota"/>
</dbReference>
<dbReference type="InParanoid" id="Q5TYV4"/>
<dbReference type="OrthoDB" id="9977282at2759"/>
<dbReference type="PhylomeDB" id="Q5TYV4"/>
<dbReference type="TreeFam" id="TF319640"/>
<dbReference type="PRO" id="PR:Q5TYV4"/>
<dbReference type="Proteomes" id="UP000000437">
    <property type="component" value="Chromosome 20"/>
</dbReference>
<dbReference type="Bgee" id="ENSDARG00000103690">
    <property type="expression patterns" value="Expressed in brain and 28 other cell types or tissues"/>
</dbReference>
<dbReference type="ExpressionAtlas" id="Q5TYV4">
    <property type="expression patterns" value="baseline"/>
</dbReference>
<dbReference type="GO" id="GO:0005737">
    <property type="term" value="C:cytoplasm"/>
    <property type="evidence" value="ECO:0000250"/>
    <property type="project" value="UniProtKB"/>
</dbReference>
<dbReference type="GO" id="GO:0005769">
    <property type="term" value="C:early endosome"/>
    <property type="evidence" value="ECO:0007669"/>
    <property type="project" value="UniProtKB-SubCell"/>
</dbReference>
<dbReference type="GO" id="GO:0005770">
    <property type="term" value="C:late endosome"/>
    <property type="evidence" value="ECO:0007669"/>
    <property type="project" value="UniProtKB-SubCell"/>
</dbReference>
<dbReference type="GO" id="GO:0055037">
    <property type="term" value="C:recycling endosome"/>
    <property type="evidence" value="ECO:0007669"/>
    <property type="project" value="UniProtKB-SubCell"/>
</dbReference>
<dbReference type="GO" id="GO:0030154">
    <property type="term" value="P:cell differentiation"/>
    <property type="evidence" value="ECO:0007669"/>
    <property type="project" value="UniProtKB-KW"/>
</dbReference>
<dbReference type="GO" id="GO:0061008">
    <property type="term" value="P:hepaticobiliary system development"/>
    <property type="evidence" value="ECO:0000315"/>
    <property type="project" value="ZFIN"/>
</dbReference>
<dbReference type="GO" id="GO:0006886">
    <property type="term" value="P:intracellular protein transport"/>
    <property type="evidence" value="ECO:0000318"/>
    <property type="project" value="GO_Central"/>
</dbReference>
<dbReference type="GO" id="GO:0007283">
    <property type="term" value="P:spermatogenesis"/>
    <property type="evidence" value="ECO:0007669"/>
    <property type="project" value="UniProtKB-KW"/>
</dbReference>
<dbReference type="GO" id="GO:0007034">
    <property type="term" value="P:vacuolar transport"/>
    <property type="evidence" value="ECO:0000318"/>
    <property type="project" value="GO_Central"/>
</dbReference>
<dbReference type="InterPro" id="IPR040057">
    <property type="entry name" value="Spe-39"/>
</dbReference>
<dbReference type="InterPro" id="IPR006925">
    <property type="entry name" value="Vps16_C"/>
</dbReference>
<dbReference type="PANTHER" id="PTHR13364">
    <property type="entry name" value="DEFECTIVE SPERMATOGENESIS PROTEIN 39"/>
    <property type="match status" value="1"/>
</dbReference>
<dbReference type="PANTHER" id="PTHR13364:SF6">
    <property type="entry name" value="SPERMATOGENESIS-DEFECTIVE PROTEIN 39 HOMOLOG"/>
    <property type="match status" value="1"/>
</dbReference>
<dbReference type="Pfam" id="PF04840">
    <property type="entry name" value="Vps16_C"/>
    <property type="match status" value="1"/>
</dbReference>
<protein>
    <recommendedName>
        <fullName>Spermatogenesis-defective protein 39 homolog</fullName>
        <shortName>hSPE-39</shortName>
    </recommendedName>
    <alternativeName>
        <fullName>VPS33B-interacting protein in apical-basolateral polarity regulator</fullName>
    </alternativeName>
    <alternativeName>
        <fullName>VPS33B-interacting protein in polarity and apical restriction</fullName>
    </alternativeName>
</protein>
<proteinExistence type="evidence at transcript level"/>
<evidence type="ECO:0000250" key="1"/>
<evidence type="ECO:0000250" key="2">
    <source>
        <dbReference type="UniProtKB" id="Q9H9C1"/>
    </source>
</evidence>
<evidence type="ECO:0000269" key="3">
    <source>
    </source>
</evidence>
<evidence type="ECO:0000305" key="4"/>
<evidence type="ECO:0000312" key="5">
    <source>
        <dbReference type="EMBL" id="AAH97010.1"/>
    </source>
</evidence>
<evidence type="ECO:0000312" key="6">
    <source>
        <dbReference type="EMBL" id="AAQ94572.1"/>
    </source>
</evidence>
<evidence type="ECO:0000312" key="7">
    <source>
        <dbReference type="EMBL" id="CAH68911.1"/>
    </source>
</evidence>
<feature type="chain" id="PRO_0000395314" description="Spermatogenesis-defective protein 39 homolog">
    <location>
        <begin position="1"/>
        <end position="483"/>
    </location>
</feature>
<feature type="sequence conflict" description="In Ref. 1; AAQ94572 and 3; AAH97010." evidence="4" ref="1 3">
    <original>E</original>
    <variation>D</variation>
    <location>
        <position position="215"/>
    </location>
</feature>
<feature type="sequence conflict" description="In Ref. 3; AAH97010." evidence="4" ref="3">
    <original>N</original>
    <variation>S</variation>
    <location>
        <position position="442"/>
    </location>
</feature>
<comment type="function">
    <text evidence="2 3">Proposed to be involved in endosomal maturation implicating in part vps33b. In epithelial cells, the vps33b:vipas39 complex may play a role in the apical rab11a-dependent recycling pathway and in the maintenance of the apical-basolateral polarity. May play a role in lysosomal trafficking, probably via association with the core HOPS complex in a discrete population of endosomes; the functions seems to be independent of vps33b. May play a role in vesicular trafficking during spermatogenesis (By similarity). May be involved in direct or indirect transcriptional regulation of E-cadherin.</text>
</comment>
<comment type="subunit">
    <text evidence="2">Interacts with vps33b.</text>
</comment>
<comment type="subcellular location">
    <subcellularLocation>
        <location evidence="1">Cytoplasm</location>
    </subcellularLocation>
    <subcellularLocation>
        <location evidence="1">Cytoplasmic vesicle</location>
    </subcellularLocation>
    <subcellularLocation>
        <location evidence="2">Early endosome</location>
    </subcellularLocation>
    <subcellularLocation>
        <location evidence="2">Recycling endosome</location>
    </subcellularLocation>
    <subcellularLocation>
        <location evidence="2">Late endosome</location>
    </subcellularLocation>
</comment>
<comment type="tissue specificity">
    <text evidence="3">High levels detected in liver and small intestine of larvae at 5 days post-fertilization.</text>
</comment>
<comment type="similarity">
    <text evidence="4">Belongs to the SPE39 family.</text>
</comment>
<organism>
    <name type="scientific">Danio rerio</name>
    <name type="common">Zebrafish</name>
    <name type="synonym">Brachydanio rerio</name>
    <dbReference type="NCBI Taxonomy" id="7955"/>
    <lineage>
        <taxon>Eukaryota</taxon>
        <taxon>Metazoa</taxon>
        <taxon>Chordata</taxon>
        <taxon>Craniata</taxon>
        <taxon>Vertebrata</taxon>
        <taxon>Euteleostomi</taxon>
        <taxon>Actinopterygii</taxon>
        <taxon>Neopterygii</taxon>
        <taxon>Teleostei</taxon>
        <taxon>Ostariophysi</taxon>
        <taxon>Cypriniformes</taxon>
        <taxon>Danionidae</taxon>
        <taxon>Danioninae</taxon>
        <taxon>Danio</taxon>
    </lineage>
</organism>
<reference evidence="6" key="1">
    <citation type="journal article" date="2004" name="Proc. Natl. Acad. Sci. U.S.A.">
        <title>Hematopoietic gene expression profile in zebrafish kidney marrow.</title>
        <authorList>
            <person name="Song H.-D."/>
            <person name="Sun X.-J."/>
            <person name="Deng M."/>
            <person name="Zhang G.-W."/>
            <person name="Zhou Y."/>
            <person name="Wu X.-Y."/>
            <person name="Sheng Y."/>
            <person name="Chen Y."/>
            <person name="Ruan Z."/>
            <person name="Jiang C.-L."/>
            <person name="Fan H.-Y."/>
            <person name="Zon L.I."/>
            <person name="Kanki J.P."/>
            <person name="Liu T.X."/>
            <person name="Look A.T."/>
            <person name="Chen Z."/>
        </authorList>
    </citation>
    <scope>NUCLEOTIDE SEQUENCE [LARGE SCALE MRNA]</scope>
    <source>
        <tissue evidence="6">Kidney marrow</tissue>
    </source>
</reference>
<reference key="2">
    <citation type="journal article" date="2013" name="Nature">
        <title>The zebrafish reference genome sequence and its relationship to the human genome.</title>
        <authorList>
            <person name="Howe K."/>
            <person name="Clark M.D."/>
            <person name="Torroja C.F."/>
            <person name="Torrance J."/>
            <person name="Berthelot C."/>
            <person name="Muffato M."/>
            <person name="Collins J.E."/>
            <person name="Humphray S."/>
            <person name="McLaren K."/>
            <person name="Matthews L."/>
            <person name="McLaren S."/>
            <person name="Sealy I."/>
            <person name="Caccamo M."/>
            <person name="Churcher C."/>
            <person name="Scott C."/>
            <person name="Barrett J.C."/>
            <person name="Koch R."/>
            <person name="Rauch G.J."/>
            <person name="White S."/>
            <person name="Chow W."/>
            <person name="Kilian B."/>
            <person name="Quintais L.T."/>
            <person name="Guerra-Assuncao J.A."/>
            <person name="Zhou Y."/>
            <person name="Gu Y."/>
            <person name="Yen J."/>
            <person name="Vogel J.H."/>
            <person name="Eyre T."/>
            <person name="Redmond S."/>
            <person name="Banerjee R."/>
            <person name="Chi J."/>
            <person name="Fu B."/>
            <person name="Langley E."/>
            <person name="Maguire S.F."/>
            <person name="Laird G.K."/>
            <person name="Lloyd D."/>
            <person name="Kenyon E."/>
            <person name="Donaldson S."/>
            <person name="Sehra H."/>
            <person name="Almeida-King J."/>
            <person name="Loveland J."/>
            <person name="Trevanion S."/>
            <person name="Jones M."/>
            <person name="Quail M."/>
            <person name="Willey D."/>
            <person name="Hunt A."/>
            <person name="Burton J."/>
            <person name="Sims S."/>
            <person name="McLay K."/>
            <person name="Plumb B."/>
            <person name="Davis J."/>
            <person name="Clee C."/>
            <person name="Oliver K."/>
            <person name="Clark R."/>
            <person name="Riddle C."/>
            <person name="Elliot D."/>
            <person name="Threadgold G."/>
            <person name="Harden G."/>
            <person name="Ware D."/>
            <person name="Begum S."/>
            <person name="Mortimore B."/>
            <person name="Kerry G."/>
            <person name="Heath P."/>
            <person name="Phillimore B."/>
            <person name="Tracey A."/>
            <person name="Corby N."/>
            <person name="Dunn M."/>
            <person name="Johnson C."/>
            <person name="Wood J."/>
            <person name="Clark S."/>
            <person name="Pelan S."/>
            <person name="Griffiths G."/>
            <person name="Smith M."/>
            <person name="Glithero R."/>
            <person name="Howden P."/>
            <person name="Barker N."/>
            <person name="Lloyd C."/>
            <person name="Stevens C."/>
            <person name="Harley J."/>
            <person name="Holt K."/>
            <person name="Panagiotidis G."/>
            <person name="Lovell J."/>
            <person name="Beasley H."/>
            <person name="Henderson C."/>
            <person name="Gordon D."/>
            <person name="Auger K."/>
            <person name="Wright D."/>
            <person name="Collins J."/>
            <person name="Raisen C."/>
            <person name="Dyer L."/>
            <person name="Leung K."/>
            <person name="Robertson L."/>
            <person name="Ambridge K."/>
            <person name="Leongamornlert D."/>
            <person name="McGuire S."/>
            <person name="Gilderthorp R."/>
            <person name="Griffiths C."/>
            <person name="Manthravadi D."/>
            <person name="Nichol S."/>
            <person name="Barker G."/>
            <person name="Whitehead S."/>
            <person name="Kay M."/>
            <person name="Brown J."/>
            <person name="Murnane C."/>
            <person name="Gray E."/>
            <person name="Humphries M."/>
            <person name="Sycamore N."/>
            <person name="Barker D."/>
            <person name="Saunders D."/>
            <person name="Wallis J."/>
            <person name="Babbage A."/>
            <person name="Hammond S."/>
            <person name="Mashreghi-Mohammadi M."/>
            <person name="Barr L."/>
            <person name="Martin S."/>
            <person name="Wray P."/>
            <person name="Ellington A."/>
            <person name="Matthews N."/>
            <person name="Ellwood M."/>
            <person name="Woodmansey R."/>
            <person name="Clark G."/>
            <person name="Cooper J."/>
            <person name="Tromans A."/>
            <person name="Grafham D."/>
            <person name="Skuce C."/>
            <person name="Pandian R."/>
            <person name="Andrews R."/>
            <person name="Harrison E."/>
            <person name="Kimberley A."/>
            <person name="Garnett J."/>
            <person name="Fosker N."/>
            <person name="Hall R."/>
            <person name="Garner P."/>
            <person name="Kelly D."/>
            <person name="Bird C."/>
            <person name="Palmer S."/>
            <person name="Gehring I."/>
            <person name="Berger A."/>
            <person name="Dooley C.M."/>
            <person name="Ersan-Urun Z."/>
            <person name="Eser C."/>
            <person name="Geiger H."/>
            <person name="Geisler M."/>
            <person name="Karotki L."/>
            <person name="Kirn A."/>
            <person name="Konantz J."/>
            <person name="Konantz M."/>
            <person name="Oberlander M."/>
            <person name="Rudolph-Geiger S."/>
            <person name="Teucke M."/>
            <person name="Lanz C."/>
            <person name="Raddatz G."/>
            <person name="Osoegawa K."/>
            <person name="Zhu B."/>
            <person name="Rapp A."/>
            <person name="Widaa S."/>
            <person name="Langford C."/>
            <person name="Yang F."/>
            <person name="Schuster S.C."/>
            <person name="Carter N.P."/>
            <person name="Harrow J."/>
            <person name="Ning Z."/>
            <person name="Herrero J."/>
            <person name="Searle S.M."/>
            <person name="Enright A."/>
            <person name="Geisler R."/>
            <person name="Plasterk R.H."/>
            <person name="Lee C."/>
            <person name="Westerfield M."/>
            <person name="de Jong P.J."/>
            <person name="Zon L.I."/>
            <person name="Postlethwait J.H."/>
            <person name="Nusslein-Volhard C."/>
            <person name="Hubbard T.J."/>
            <person name="Roest Crollius H."/>
            <person name="Rogers J."/>
            <person name="Stemple D.L."/>
        </authorList>
    </citation>
    <scope>NUCLEOTIDE SEQUENCE [LARGE SCALE GENOMIC DNA]</scope>
    <source>
        <strain>Tuebingen</strain>
    </source>
</reference>
<reference evidence="7" key="3">
    <citation type="submission" date="2005-06" db="EMBL/GenBank/DDBJ databases">
        <authorList>
            <consortium name="NIH - Zebrafish Gene Collection (ZGC) project"/>
        </authorList>
    </citation>
    <scope>NUCLEOTIDE SEQUENCE [LARGE SCALE MRNA]</scope>
    <source>
        <tissue evidence="5">Olfactory epithelium</tissue>
    </source>
</reference>
<reference evidence="4" key="4">
    <citation type="journal article" date="2010" name="Nat. Genet.">
        <title>Mutations in VIPAR cause an arthrogryposis, renal dysfunction and cholestasis syndrome phenotype with defects in epithelial polarization.</title>
        <authorList>
            <person name="Cullinane A.R."/>
            <person name="Straatman-Iwanowska A."/>
            <person name="Zaucker A."/>
            <person name="Wakabayashi Y."/>
            <person name="Bruce C.K."/>
            <person name="Luo G."/>
            <person name="Rahman F."/>
            <person name="Gurakan F."/>
            <person name="Utine E."/>
            <person name="Ozkan T.B."/>
            <person name="Denecke J."/>
            <person name="Vukovic J."/>
            <person name="Di Rocco M."/>
            <person name="Mandel H."/>
            <person name="Cangul H."/>
            <person name="Matthews R.P."/>
            <person name="Thomas S.G."/>
            <person name="Rappoport J.Z."/>
            <person name="Arias I.M."/>
            <person name="Wolburg H."/>
            <person name="Knisely A.S."/>
            <person name="Kelly D.A."/>
            <person name="Muller F."/>
            <person name="Maher E.R."/>
            <person name="Gissen P."/>
        </authorList>
    </citation>
    <scope>FUNCTION</scope>
    <scope>TISSUE SPECIFICITY</scope>
</reference>
<accession>Q5TYV4</accession>
<accession>Q4QRG4</accession>
<accession>Q6TLG0</accession>
<gene>
    <name type="primary">vipas39</name>
    <name type="synonym">spe39</name>
    <name type="synonym">vipar</name>
    <name type="ORF">si:ch211-20b12.1</name>
</gene>
<sequence length="483" mass="56073">MTRAKPEDDEYWNSSKFKAFTFDDEDDEFSRLKESKRAVNSILVDDDDDEDDVEKVSWSGEPVGSISWSVRETASSIRSGSEQNFPKIDTAPSLSKQGSGYSLSSLFKAKSKPTAFQSFSESFSETSARTYAPELRKPKSDGKDFVSDLSPEETIRRMQKGRAFSMEKFRSLQDKLLLLDEAVSVYDGNVITAVLIYLKKSLSKEILFRELMPREVALRHYIHYLKEMGEQKLLVELLKALGRTEDMALMQYKEHLNIKDEGRRRDFLKSCLSLPFSQDDSTHVQDHYTLLERQIIIEASDKKADTDIFKKFPRKASILNMPIITTLYYSCFYHYGEPEGTFSSPSNIRKTFRISEKQYITTALGARAKLKSWFDVDSLFNTKNWLGYTKKRSPIAFHRVVDILQKNSAPVQVLQEYVNLIDDPELKLSVALKYKCHDIIINTYRDLKDRQQLIVYREKLERDSPEYRKIQELLNNGQIRWKN</sequence>